<name>VF151_ASFK5</name>
<organism>
    <name type="scientific">African swine fever virus (isolate Pig/Kenya/KEN-50/1950)</name>
    <name type="common">ASFV</name>
    <dbReference type="NCBI Taxonomy" id="561445"/>
    <lineage>
        <taxon>Viruses</taxon>
        <taxon>Varidnaviria</taxon>
        <taxon>Bamfordvirae</taxon>
        <taxon>Nucleocytoviricota</taxon>
        <taxon>Pokkesviricetes</taxon>
        <taxon>Asfuvirales</taxon>
        <taxon>Asfarviridae</taxon>
        <taxon>Asfivirus</taxon>
        <taxon>African swine fever virus</taxon>
    </lineage>
</organism>
<comment type="function">
    <text evidence="1">May participate in a redox cascade for the formation of disulfide bonds in viral proteins.</text>
</comment>
<comment type="cofactor">
    <cofactor evidence="1">
        <name>Zn(2+)</name>
        <dbReference type="ChEBI" id="CHEBI:29105"/>
    </cofactor>
    <text evidence="1">Binds 1 Zn(2+) ion.</text>
</comment>
<comment type="subunit">
    <text evidence="1">Monomer (By similarity). Homodimer (By similarity). Interacts with protein B119L (By similarity). Interacts with membrane protein E248R (By similarity).</text>
</comment>
<comment type="induction">
    <text evidence="2">Expressed in the early phase of the viral replicative cycle.</text>
</comment>
<comment type="similarity">
    <text evidence="2">Belongs to the asfivirus A151R family.</text>
</comment>
<reference key="1">
    <citation type="submission" date="2003-03" db="EMBL/GenBank/DDBJ databases">
        <title>African swine fever virus genomes.</title>
        <authorList>
            <person name="Kutish G.F."/>
            <person name="Rock D.L."/>
        </authorList>
    </citation>
    <scope>NUCLEOTIDE SEQUENCE [LARGE SCALE GENOMIC DNA]</scope>
</reference>
<protein>
    <recommendedName>
        <fullName>Protein A151R</fullName>
        <shortName>pA151R</shortName>
    </recommendedName>
</protein>
<proteinExistence type="inferred from homology"/>
<evidence type="ECO:0000250" key="1">
    <source>
        <dbReference type="UniProtKB" id="Q65140"/>
    </source>
</evidence>
<evidence type="ECO:0000305" key="2"/>
<sequence length="150" mass="17435">MALLHKEKLIECIDNELQNSGTLLLLTKNIVVSEISYNGNDYKYFTFNENHDLIGQENLKGATSNNIAKMVYNWIAKNPQTNKVWVGEPRIRIYFKNNLYHTNNNHVCIKDFYKVSISVSPNIFNDRSIWCTKCTSFYPFSSILSPNLFQ</sequence>
<keyword id="KW-0244">Early protein</keyword>
<keyword id="KW-0479">Metal-binding</keyword>
<gene>
    <name type="ordered locus">Ken-049</name>
</gene>
<organismHost>
    <name type="scientific">Ornithodoros</name>
    <name type="common">relapsing fever ticks</name>
    <dbReference type="NCBI Taxonomy" id="6937"/>
</organismHost>
<organismHost>
    <name type="scientific">Phacochoerus aethiopicus</name>
    <name type="common">Warthog</name>
    <dbReference type="NCBI Taxonomy" id="85517"/>
</organismHost>
<organismHost>
    <name type="scientific">Phacochoerus africanus</name>
    <name type="common">Warthog</name>
    <dbReference type="NCBI Taxonomy" id="41426"/>
</organismHost>
<organismHost>
    <name type="scientific">Potamochoerus larvatus</name>
    <name type="common">Bushpig</name>
    <dbReference type="NCBI Taxonomy" id="273792"/>
</organismHost>
<organismHost>
    <name type="scientific">Sus scrofa</name>
    <name type="common">Pig</name>
    <dbReference type="NCBI Taxonomy" id="9823"/>
</organismHost>
<feature type="chain" id="PRO_0000373530" description="Protein A151R">
    <location>
        <begin position="1"/>
        <end position="150"/>
    </location>
</feature>
<accession>P0CA55</accession>
<dbReference type="EMBL" id="AY261360">
    <property type="status" value="NOT_ANNOTATED_CDS"/>
    <property type="molecule type" value="Genomic_DNA"/>
</dbReference>
<dbReference type="SMR" id="P0CA55"/>
<dbReference type="Proteomes" id="UP000000861">
    <property type="component" value="Segment"/>
</dbReference>
<dbReference type="GO" id="GO:0046872">
    <property type="term" value="F:metal ion binding"/>
    <property type="evidence" value="ECO:0007669"/>
    <property type="project" value="UniProtKB-KW"/>
</dbReference>